<dbReference type="EC" id="3.5.4.2" evidence="1"/>
<dbReference type="EMBL" id="AM236083">
    <property type="protein sequence ID" value="CAK03886.1"/>
    <property type="molecule type" value="Genomic_DNA"/>
</dbReference>
<dbReference type="EMBL" id="AM236080">
    <property type="protein sequence ID" value="CAK09957.1"/>
    <property type="molecule type" value="Genomic_DNA"/>
</dbReference>
<dbReference type="RefSeq" id="WP_011649691.1">
    <property type="nucleotide sequence ID" value="NC_008379.1"/>
</dbReference>
<dbReference type="SMR" id="Q1M901"/>
<dbReference type="EnsemblBacteria" id="CAK03886">
    <property type="protein sequence ID" value="CAK03886"/>
    <property type="gene ID" value="pRL90169"/>
</dbReference>
<dbReference type="EnsemblBacteria" id="CAK09957">
    <property type="protein sequence ID" value="CAK09957"/>
    <property type="gene ID" value="RL4472"/>
</dbReference>
<dbReference type="KEGG" id="rle:pRL90169"/>
<dbReference type="KEGG" id="rle:RL4472"/>
<dbReference type="eggNOG" id="COG1001">
    <property type="taxonomic scope" value="Bacteria"/>
</dbReference>
<dbReference type="HOGENOM" id="CLU_027935_0_0_5"/>
<dbReference type="Proteomes" id="UP000006575">
    <property type="component" value="Chromosome"/>
</dbReference>
<dbReference type="Proteomes" id="UP000006575">
    <property type="component" value="Plasmid pRL9"/>
</dbReference>
<dbReference type="GO" id="GO:0000034">
    <property type="term" value="F:adenine deaminase activity"/>
    <property type="evidence" value="ECO:0007669"/>
    <property type="project" value="UniProtKB-UniRule"/>
</dbReference>
<dbReference type="GO" id="GO:0006146">
    <property type="term" value="P:adenine catabolic process"/>
    <property type="evidence" value="ECO:0007669"/>
    <property type="project" value="InterPro"/>
</dbReference>
<dbReference type="FunFam" id="3.20.20.140:FF:000061">
    <property type="entry name" value="Adenine deaminase"/>
    <property type="match status" value="1"/>
</dbReference>
<dbReference type="Gene3D" id="3.20.20.140">
    <property type="entry name" value="Metal-dependent hydrolases"/>
    <property type="match status" value="1"/>
</dbReference>
<dbReference type="Gene3D" id="2.30.40.10">
    <property type="entry name" value="Urease, subunit C, domain 1"/>
    <property type="match status" value="1"/>
</dbReference>
<dbReference type="HAMAP" id="MF_01518">
    <property type="entry name" value="Adenine_deamin"/>
    <property type="match status" value="1"/>
</dbReference>
<dbReference type="InterPro" id="IPR006679">
    <property type="entry name" value="Adenine_deam"/>
</dbReference>
<dbReference type="InterPro" id="IPR026912">
    <property type="entry name" value="Adenine_deam_C"/>
</dbReference>
<dbReference type="InterPro" id="IPR006680">
    <property type="entry name" value="Amidohydro-rel"/>
</dbReference>
<dbReference type="InterPro" id="IPR011059">
    <property type="entry name" value="Metal-dep_hydrolase_composite"/>
</dbReference>
<dbReference type="InterPro" id="IPR032466">
    <property type="entry name" value="Metal_Hydrolase"/>
</dbReference>
<dbReference type="PANTHER" id="PTHR11113:SF2">
    <property type="entry name" value="ADENINE DEAMINASE"/>
    <property type="match status" value="1"/>
</dbReference>
<dbReference type="PANTHER" id="PTHR11113">
    <property type="entry name" value="N-ACETYLGLUCOSAMINE-6-PHOSPHATE DEACETYLASE"/>
    <property type="match status" value="1"/>
</dbReference>
<dbReference type="Pfam" id="PF13382">
    <property type="entry name" value="Adenine_deam_C"/>
    <property type="match status" value="1"/>
</dbReference>
<dbReference type="Pfam" id="PF01979">
    <property type="entry name" value="Amidohydro_1"/>
    <property type="match status" value="1"/>
</dbReference>
<dbReference type="SUPFAM" id="SSF51338">
    <property type="entry name" value="Composite domain of metallo-dependent hydrolases"/>
    <property type="match status" value="1"/>
</dbReference>
<dbReference type="SUPFAM" id="SSF51556">
    <property type="entry name" value="Metallo-dependent hydrolases"/>
    <property type="match status" value="1"/>
</dbReference>
<gene>
    <name evidence="1" type="primary">ade3</name>
    <name type="ordered locus">RL4472</name>
</gene>
<gene>
    <name evidence="1" type="primary">ade4</name>
    <name type="ordered locus">pRL90169</name>
</gene>
<protein>
    <recommendedName>
        <fullName evidence="1">Adenine deaminase 3</fullName>
        <shortName evidence="1">Adenase 3</shortName>
        <shortName evidence="1">Adenine aminase 3</shortName>
        <ecNumber evidence="1">3.5.4.2</ecNumber>
    </recommendedName>
</protein>
<proteinExistence type="inferred from homology"/>
<evidence type="ECO:0000255" key="1">
    <source>
        <dbReference type="HAMAP-Rule" id="MF_01518"/>
    </source>
</evidence>
<geneLocation type="plasmid">
    <name>pRL9</name>
</geneLocation>
<organism>
    <name type="scientific">Rhizobium johnstonii (strain DSM 114642 / LMG 32736 / 3841)</name>
    <name type="common">Rhizobium leguminosarum bv. viciae</name>
    <dbReference type="NCBI Taxonomy" id="216596"/>
    <lineage>
        <taxon>Bacteria</taxon>
        <taxon>Pseudomonadati</taxon>
        <taxon>Pseudomonadota</taxon>
        <taxon>Alphaproteobacteria</taxon>
        <taxon>Hyphomicrobiales</taxon>
        <taxon>Rhizobiaceae</taxon>
        <taxon>Rhizobium/Agrobacterium group</taxon>
        <taxon>Rhizobium</taxon>
        <taxon>Rhizobium johnstonii</taxon>
    </lineage>
</organism>
<sequence length="600" mass="64116">MSTLTRFSVQPLSTMTRRLADVASARREPDLVIQGARVLSTYSERFLDGREVWISGGRIAAVKPAGSYRGGSAKLYDARGGIIAPGLVDPHIHIESSMVTACAYAEAALLNGTTTIFCDSHEIGNVMDVAGVEAMLEDARQAPLSIFLTVPSTVPATTPDLETAGGDLTPDKIAALFDKWPEAVALGEKMDFVPVAMGDERSHAILAAALGRGRPVSGHVYGREFVAAYAASGVTDTHEAIDRGIADDLLEAGVWIFLRGGPPTTPWHSLPQAIKTITELGASHKRVAVCTDDRDAEDLLAFGLDWVTREAVKYGMRPEEAWAMGSLHGATRFGMEGEIGGLGGGRRADLVLLSDDLTPVSTWYGGKLVVDSKKITPILDEALSKPYRYPDAAYHTVKLPKNLKLTPDLPTETVVAHTIKTELPGITLGHVTVTLEPANDWQAHFDKHDLCFVTVVERHGKSAGNVAHGLLNGFGLRQGAVASSVGHDSHNIIVAGTNAADMQVALDAIEEKQGGVCVVMDGKVTAMVPLPIAGLLSDKRVHQVADEVKALKLEWEKAGCTIAYMGFNLIPLSVIPEIRITDKGLVLVPEMVISPLFEKA</sequence>
<reference key="1">
    <citation type="journal article" date="2006" name="Genome Biol.">
        <title>The genome of Rhizobium leguminosarum has recognizable core and accessory components.</title>
        <authorList>
            <person name="Young J.P.W."/>
            <person name="Crossman L.C."/>
            <person name="Johnston A.W.B."/>
            <person name="Thomson N.R."/>
            <person name="Ghazoui Z.F."/>
            <person name="Hull K.H."/>
            <person name="Wexler M."/>
            <person name="Curson A.R.J."/>
            <person name="Todd J.D."/>
            <person name="Poole P.S."/>
            <person name="Mauchline T.H."/>
            <person name="East A.K."/>
            <person name="Quail M.A."/>
            <person name="Churcher C."/>
            <person name="Arrowsmith C."/>
            <person name="Cherevach I."/>
            <person name="Chillingworth T."/>
            <person name="Clarke K."/>
            <person name="Cronin A."/>
            <person name="Davis P."/>
            <person name="Fraser A."/>
            <person name="Hance Z."/>
            <person name="Hauser H."/>
            <person name="Jagels K."/>
            <person name="Moule S."/>
            <person name="Mungall K."/>
            <person name="Norbertczak H."/>
            <person name="Rabbinowitsch E."/>
            <person name="Sanders M."/>
            <person name="Simmonds M."/>
            <person name="Whitehead S."/>
            <person name="Parkhill J."/>
        </authorList>
    </citation>
    <scope>NUCLEOTIDE SEQUENCE [LARGE SCALE GENOMIC DNA]</scope>
    <source>
        <strain>DSM 114642 / LMG 32736 / 3841</strain>
    </source>
</reference>
<keyword id="KW-0378">Hydrolase</keyword>
<keyword id="KW-0464">Manganese</keyword>
<keyword id="KW-0614">Plasmid</keyword>
<name>ADEC3_RHIJ3</name>
<feature type="chain" id="PRO_0000292396" description="Adenine deaminase 3">
    <location>
        <begin position="1"/>
        <end position="600"/>
    </location>
</feature>
<accession>Q1M901</accession>
<comment type="catalytic activity">
    <reaction evidence="1">
        <text>adenine + H2O + H(+) = hypoxanthine + NH4(+)</text>
        <dbReference type="Rhea" id="RHEA:23688"/>
        <dbReference type="ChEBI" id="CHEBI:15377"/>
        <dbReference type="ChEBI" id="CHEBI:15378"/>
        <dbReference type="ChEBI" id="CHEBI:16708"/>
        <dbReference type="ChEBI" id="CHEBI:17368"/>
        <dbReference type="ChEBI" id="CHEBI:28938"/>
        <dbReference type="EC" id="3.5.4.2"/>
    </reaction>
</comment>
<comment type="cofactor">
    <cofactor evidence="1">
        <name>Mn(2+)</name>
        <dbReference type="ChEBI" id="CHEBI:29035"/>
    </cofactor>
</comment>
<comment type="similarity">
    <text evidence="1">Belongs to the metallo-dependent hydrolases superfamily. Adenine deaminase family.</text>
</comment>